<comment type="function">
    <text evidence="6 7 8 11">Proton-coupled transporter that delivers pathogen-associated or danger-associated molecular patterns to cytosolic pattern recognition receptors as part of the innate immune response to microbes or tissue injury (PubMed:28539433, PubMed:34235268, PubMed:37116499). Has selectivity toward muropeptides that contain the amino acid diaminopimelic acid (DAP-type peptidoglycan muropeptides) including Tri-DAP and tracheal toxin (TCT), common in Gram-negative bacteria and Gram-positive bacilli. In the context of immune recognition of skin microbiota, shuttles bacterial muropeptides across the endolysosomal membranes into the cytosol for recognition by NOD1, triggering MYD88-dependent secretion of IL1A and neutrophil recruitment in a pyroptosis-type inflammatory process (PubMed:28539433, PubMed:37116499). To a lesser extent and redundantly, transports muramyl dipeptides derived from most bacterial proteoglycans, eliciting NOD2 receptor activation and downstream inflammatory responses (PubMed:28539433). Postulated to function as an importer of cyclic GMP-AMP dinucleotides (cGAMPs) in monocyte and macrophage cell lineages. Selectively imports cGAMPs derived from pathogenic bacteria such as 3'3'-cGAMP thus providing for differential immune recognition of pathogenic versus commensal bacteria. During tumorigenesis may transport extracellular tumor-derived 2'3'-cGAMP across the plasma membrane of M1-polarized macrophages to activate the anti-tumoral stimulator of interferon genes (STING) pathway (PubMed:34235268). The transport mechanism, its electrogenicity and stoichiometry remain to be elucidated (Probable).</text>
</comment>
<comment type="catalytic activity">
    <reaction evidence="6 8">
        <text>N-acetyl-beta-D-glucosaminyl-(1-&gt;4)-1,6-anhydro-N-acetyl-beta-D-muramoyl-L-alanyl-gamma-D-glutamyl-meso-2,6-diaminopimeloyl-D-alanine(out) + n H(+)(out) = N-acetyl-beta-D-glucosaminyl-(1-&gt;4)-1,6-anhydro-N-acetyl-beta-D-muramoyl-L-alanyl-gamma-D-glutamyl-meso-2,6-diaminopimeloyl-D-alanine(in) + n H(+)(in)</text>
        <dbReference type="Rhea" id="RHEA:76355"/>
        <dbReference type="ChEBI" id="CHEBI:15378"/>
        <dbReference type="ChEBI" id="CHEBI:195208"/>
    </reaction>
    <physiologicalReaction direction="left-to-right" evidence="12 14">
        <dbReference type="Rhea" id="RHEA:76356"/>
    </physiologicalReaction>
</comment>
<comment type="catalytic activity">
    <reaction evidence="8">
        <text>L-alanyl-gamma-D-glutamyl-meso-2,6-diaminopimelate(out) + n H(+)(out) = L-alanyl-gamma-D-glutamyl-meso-2,6-diaminopimelate(in) + n H(+)(in)</text>
        <dbReference type="Rhea" id="RHEA:64412"/>
        <dbReference type="ChEBI" id="CHEBI:15378"/>
        <dbReference type="ChEBI" id="CHEBI:61401"/>
    </reaction>
    <physiologicalReaction direction="left-to-right" evidence="14">
        <dbReference type="Rhea" id="RHEA:64413"/>
    </physiologicalReaction>
</comment>
<comment type="catalytic activity">
    <reaction evidence="6">
        <text>N-acetyl-D-muramoyl-L-alanyl-D-isoglutamine(out) + n H(+)(out) = N-acetyl-D-muramoyl-L-alanyl-D-isoglutamine(in) + n H(+)(in)</text>
        <dbReference type="Rhea" id="RHEA:76371"/>
        <dbReference type="ChEBI" id="CHEBI:15378"/>
        <dbReference type="ChEBI" id="CHEBI:155830"/>
    </reaction>
    <physiologicalReaction direction="left-to-right" evidence="12">
        <dbReference type="Rhea" id="RHEA:76372"/>
    </physiologicalReaction>
</comment>
<comment type="catalytic activity">
    <reaction evidence="7">
        <text>2',3'-cGAMP(out) + n H(+)(out) = 2',3'-cGAMP(in) + n H(+)(in)</text>
        <dbReference type="Rhea" id="RHEA:76411"/>
        <dbReference type="ChEBI" id="CHEBI:15378"/>
        <dbReference type="ChEBI" id="CHEBI:143093"/>
    </reaction>
    <physiologicalReaction direction="left-to-right" evidence="13">
        <dbReference type="Rhea" id="RHEA:76412"/>
    </physiologicalReaction>
</comment>
<comment type="catalytic activity">
    <reaction evidence="1">
        <text>3',3'-cGAMP(out) + n H(+)(out) = 3',3'-cGAMP(in) + n H(+)(in)</text>
        <dbReference type="Rhea" id="RHEA:76415"/>
        <dbReference type="ChEBI" id="CHEBI:15378"/>
        <dbReference type="ChEBI" id="CHEBI:71501"/>
    </reaction>
    <physiologicalReaction direction="left-to-right" evidence="1">
        <dbReference type="Rhea" id="RHEA:76416"/>
    </physiologicalReaction>
</comment>
<comment type="activity regulation">
    <text evidence="8">Down-regulated by the anti-inflammatory drug methotrexate.</text>
</comment>
<comment type="subcellular location">
    <subcellularLocation>
        <location evidence="6">Endosome membrane</location>
        <topology evidence="2">Multi-pass membrane protein</topology>
    </subcellularLocation>
    <subcellularLocation>
        <location evidence="1">Cell membrane</location>
        <topology evidence="1">Multi-pass membrane protein</topology>
    </subcellularLocation>
    <text evidence="6">Localizes in acidic vesicles likely late endosomes and/or endolysosomes.</text>
</comment>
<comment type="tissue specificity">
    <text evidence="4 5 8">Expressed on cortical epithelial cells in the thymus. Mainly expressed in the thymic cortex and is highly enriched in SCID thymus. Also expressed in lymph nodes, heart, fetal liver, brain, spleen, intestine and kidney, but not in adult liver, skin, skeletal muscle and lung. Expressed in skin epidermis.</text>
</comment>
<comment type="developmental stage">
    <text evidence="4">Highly expressed during fetal thymus development and decreases after day 16.</text>
</comment>
<comment type="PTM">
    <text evidence="4">Glycosylated.</text>
</comment>
<comment type="disruption phenotype">
    <text evidence="8">Mutant mice are resistant to psoriatic inflammation.</text>
</comment>
<comment type="similarity">
    <text evidence="11">Belongs to the major facilitator superfamily. SLC46A family.</text>
</comment>
<proteinExistence type="evidence at protein level"/>
<dbReference type="EMBL" id="AF148145">
    <property type="protein sequence ID" value="AAF73110.1"/>
    <property type="molecule type" value="mRNA"/>
</dbReference>
<dbReference type="EMBL" id="AF242559">
    <property type="protein sequence ID" value="AAK28344.1"/>
    <property type="molecule type" value="Genomic_DNA"/>
</dbReference>
<dbReference type="EMBL" id="AK017363">
    <property type="protein sequence ID" value="BAB30710.1"/>
    <property type="molecule type" value="mRNA"/>
</dbReference>
<dbReference type="EMBL" id="AK040063">
    <property type="protein sequence ID" value="BAC30504.1"/>
    <property type="molecule type" value="mRNA"/>
</dbReference>
<dbReference type="EMBL" id="AL831738">
    <property type="status" value="NOT_ANNOTATED_CDS"/>
    <property type="molecule type" value="Genomic_DNA"/>
</dbReference>
<dbReference type="CCDS" id="CCDS18227.1"/>
<dbReference type="RefSeq" id="NP_066395.3">
    <property type="nucleotide sequence ID" value="NM_021053.4"/>
</dbReference>
<dbReference type="SMR" id="Q8CA03"/>
<dbReference type="FunCoup" id="Q8CA03">
    <property type="interactions" value="6"/>
</dbReference>
<dbReference type="STRING" id="10090.ENSMUSP00000030081"/>
<dbReference type="GlyCosmos" id="Q8CA03">
    <property type="glycosylation" value="2 sites, No reported glycans"/>
</dbReference>
<dbReference type="GlyGen" id="Q8CA03">
    <property type="glycosylation" value="2 sites"/>
</dbReference>
<dbReference type="PhosphoSitePlus" id="Q8CA03"/>
<dbReference type="PaxDb" id="10090-ENSMUSP00000030081"/>
<dbReference type="ProteomicsDB" id="298141"/>
<dbReference type="Antibodypedia" id="29714">
    <property type="antibodies" value="56 antibodies from 18 providers"/>
</dbReference>
<dbReference type="DNASU" id="30936"/>
<dbReference type="Ensembl" id="ENSMUST00000030081.2">
    <property type="protein sequence ID" value="ENSMUSP00000030081.2"/>
    <property type="gene ID" value="ENSMUSG00000028386.2"/>
</dbReference>
<dbReference type="GeneID" id="30936"/>
<dbReference type="KEGG" id="mmu:30936"/>
<dbReference type="UCSC" id="uc008taf.2">
    <property type="organism name" value="mouse"/>
</dbReference>
<dbReference type="AGR" id="MGI:1353616"/>
<dbReference type="CTD" id="57864"/>
<dbReference type="MGI" id="MGI:1353616">
    <property type="gene designation" value="Slc46a2"/>
</dbReference>
<dbReference type="VEuPathDB" id="HostDB:ENSMUSG00000028386"/>
<dbReference type="eggNOG" id="KOG2816">
    <property type="taxonomic scope" value="Eukaryota"/>
</dbReference>
<dbReference type="GeneTree" id="ENSGT00950000183096"/>
<dbReference type="HOGENOM" id="CLU_028365_3_0_1"/>
<dbReference type="InParanoid" id="Q8CA03"/>
<dbReference type="OMA" id="AYWSGVM"/>
<dbReference type="OrthoDB" id="430300at2759"/>
<dbReference type="PhylomeDB" id="Q8CA03"/>
<dbReference type="TreeFam" id="TF315701"/>
<dbReference type="BioGRID-ORCS" id="30936">
    <property type="hits" value="1 hit in 76 CRISPR screens"/>
</dbReference>
<dbReference type="PRO" id="PR:Q8CA03"/>
<dbReference type="Proteomes" id="UP000000589">
    <property type="component" value="Chromosome 4"/>
</dbReference>
<dbReference type="RNAct" id="Q8CA03">
    <property type="molecule type" value="protein"/>
</dbReference>
<dbReference type="Bgee" id="ENSMUSG00000028386">
    <property type="expression patterns" value="Expressed in tail skin and 27 other cell types or tissues"/>
</dbReference>
<dbReference type="GO" id="GO:0009986">
    <property type="term" value="C:cell surface"/>
    <property type="evidence" value="ECO:0000314"/>
    <property type="project" value="MGI"/>
</dbReference>
<dbReference type="GO" id="GO:0010008">
    <property type="term" value="C:endosome membrane"/>
    <property type="evidence" value="ECO:0007669"/>
    <property type="project" value="UniProtKB-SubCell"/>
</dbReference>
<dbReference type="GO" id="GO:0005886">
    <property type="term" value="C:plasma membrane"/>
    <property type="evidence" value="ECO:0000250"/>
    <property type="project" value="UniProtKB"/>
</dbReference>
<dbReference type="GO" id="GO:0140360">
    <property type="term" value="F:cyclic-GMP-AMP transmembrane transporter activity"/>
    <property type="evidence" value="ECO:0000250"/>
    <property type="project" value="UniProtKB"/>
</dbReference>
<dbReference type="GO" id="GO:0140361">
    <property type="term" value="P:cyclic-GMP-AMP transmembrane import across plasma membrane"/>
    <property type="evidence" value="ECO:0000250"/>
    <property type="project" value="UniProtKB"/>
</dbReference>
<dbReference type="GO" id="GO:0070233">
    <property type="term" value="P:negative regulation of T cell apoptotic process"/>
    <property type="evidence" value="ECO:0000316"/>
    <property type="project" value="MGI"/>
</dbReference>
<dbReference type="GO" id="GO:0070430">
    <property type="term" value="P:positive regulation of nucleotide-binding oligomerization domain containing 1 signaling pathway"/>
    <property type="evidence" value="ECO:0007669"/>
    <property type="project" value="Ensembl"/>
</dbReference>
<dbReference type="GO" id="GO:0045580">
    <property type="term" value="P:regulation of T cell differentiation"/>
    <property type="evidence" value="ECO:0000316"/>
    <property type="project" value="MGI"/>
</dbReference>
<dbReference type="GO" id="GO:0043029">
    <property type="term" value="P:T cell homeostasis"/>
    <property type="evidence" value="ECO:0000316"/>
    <property type="project" value="MGI"/>
</dbReference>
<dbReference type="GO" id="GO:0048538">
    <property type="term" value="P:thymus development"/>
    <property type="evidence" value="ECO:0000316"/>
    <property type="project" value="MGI"/>
</dbReference>
<dbReference type="CDD" id="cd17450">
    <property type="entry name" value="MFS_SLC46A2_TSCOT"/>
    <property type="match status" value="1"/>
</dbReference>
<dbReference type="FunFam" id="1.20.1250.20:FF:001256">
    <property type="entry name" value="Solute carrier family 46, member 2"/>
    <property type="match status" value="1"/>
</dbReference>
<dbReference type="Gene3D" id="1.20.1250.20">
    <property type="entry name" value="MFS general substrate transporter like domains"/>
    <property type="match status" value="1"/>
</dbReference>
<dbReference type="InterPro" id="IPR011701">
    <property type="entry name" value="MFS"/>
</dbReference>
<dbReference type="InterPro" id="IPR036259">
    <property type="entry name" value="MFS_trans_sf"/>
</dbReference>
<dbReference type="InterPro" id="IPR001958">
    <property type="entry name" value="Tet-R_TetA/multi-R_MdtG-like"/>
</dbReference>
<dbReference type="PANTHER" id="PTHR23507:SF3">
    <property type="entry name" value="THYMIC STROMAL COTRANSPORTER HOMOLOG"/>
    <property type="match status" value="1"/>
</dbReference>
<dbReference type="PANTHER" id="PTHR23507">
    <property type="entry name" value="ZGC:174356"/>
    <property type="match status" value="1"/>
</dbReference>
<dbReference type="Pfam" id="PF07690">
    <property type="entry name" value="MFS_1"/>
    <property type="match status" value="1"/>
</dbReference>
<dbReference type="PRINTS" id="PR01035">
    <property type="entry name" value="TCRTETA"/>
</dbReference>
<dbReference type="SUPFAM" id="SSF103473">
    <property type="entry name" value="MFS general substrate transporter"/>
    <property type="match status" value="1"/>
</dbReference>
<reference key="1">
    <citation type="journal article" date="2000" name="J. Immunol.">
        <title>A putative 12 transmembrane domain cotransporter expressed in thymic cortical epithelial cells.</title>
        <authorList>
            <person name="Kim M.G."/>
            <person name="Flomerfelt F.A."/>
            <person name="Lee K.-N."/>
            <person name="Chen C."/>
            <person name="Schwartz R.H."/>
        </authorList>
    </citation>
    <scope>NUCLEOTIDE SEQUENCE [MRNA]</scope>
    <scope>GLYCOSYLATION</scope>
    <scope>TISSUE SPECIFICITY</scope>
    <scope>DEVELOPMENTAL STAGE</scope>
    <source>
        <tissue>Thymus</tissue>
    </source>
</reference>
<reference key="2">
    <citation type="journal article" date="2000" name="Biochim. Biophys. Acta">
        <title>Characterization of the mouse gene, human promoter and human cDNA of TSCOT reveals strong interspecies homology.</title>
        <authorList>
            <person name="Chen C."/>
            <person name="Kim M.G."/>
            <person name="Lyu M.S."/>
            <person name="Kozak C.A."/>
            <person name="Schwartz R.H."/>
            <person name="Flomerfelt F.A."/>
        </authorList>
    </citation>
    <scope>NUCLEOTIDE SEQUENCE [GENOMIC DNA]</scope>
    <scope>TISSUE SPECIFICITY</scope>
    <source>
        <strain>129</strain>
    </source>
</reference>
<reference key="3">
    <citation type="journal article" date="2005" name="Science">
        <title>The transcriptional landscape of the mammalian genome.</title>
        <authorList>
            <person name="Carninci P."/>
            <person name="Kasukawa T."/>
            <person name="Katayama S."/>
            <person name="Gough J."/>
            <person name="Frith M.C."/>
            <person name="Maeda N."/>
            <person name="Oyama R."/>
            <person name="Ravasi T."/>
            <person name="Lenhard B."/>
            <person name="Wells C."/>
            <person name="Kodzius R."/>
            <person name="Shimokawa K."/>
            <person name="Bajic V.B."/>
            <person name="Brenner S.E."/>
            <person name="Batalov S."/>
            <person name="Forrest A.R."/>
            <person name="Zavolan M."/>
            <person name="Davis M.J."/>
            <person name="Wilming L.G."/>
            <person name="Aidinis V."/>
            <person name="Allen J.E."/>
            <person name="Ambesi-Impiombato A."/>
            <person name="Apweiler R."/>
            <person name="Aturaliya R.N."/>
            <person name="Bailey T.L."/>
            <person name="Bansal M."/>
            <person name="Baxter L."/>
            <person name="Beisel K.W."/>
            <person name="Bersano T."/>
            <person name="Bono H."/>
            <person name="Chalk A.M."/>
            <person name="Chiu K.P."/>
            <person name="Choudhary V."/>
            <person name="Christoffels A."/>
            <person name="Clutterbuck D.R."/>
            <person name="Crowe M.L."/>
            <person name="Dalla E."/>
            <person name="Dalrymple B.P."/>
            <person name="de Bono B."/>
            <person name="Della Gatta G."/>
            <person name="di Bernardo D."/>
            <person name="Down T."/>
            <person name="Engstrom P."/>
            <person name="Fagiolini M."/>
            <person name="Faulkner G."/>
            <person name="Fletcher C.F."/>
            <person name="Fukushima T."/>
            <person name="Furuno M."/>
            <person name="Futaki S."/>
            <person name="Gariboldi M."/>
            <person name="Georgii-Hemming P."/>
            <person name="Gingeras T.R."/>
            <person name="Gojobori T."/>
            <person name="Green R.E."/>
            <person name="Gustincich S."/>
            <person name="Harbers M."/>
            <person name="Hayashi Y."/>
            <person name="Hensch T.K."/>
            <person name="Hirokawa N."/>
            <person name="Hill D."/>
            <person name="Huminiecki L."/>
            <person name="Iacono M."/>
            <person name="Ikeo K."/>
            <person name="Iwama A."/>
            <person name="Ishikawa T."/>
            <person name="Jakt M."/>
            <person name="Kanapin A."/>
            <person name="Katoh M."/>
            <person name="Kawasawa Y."/>
            <person name="Kelso J."/>
            <person name="Kitamura H."/>
            <person name="Kitano H."/>
            <person name="Kollias G."/>
            <person name="Krishnan S.P."/>
            <person name="Kruger A."/>
            <person name="Kummerfeld S.K."/>
            <person name="Kurochkin I.V."/>
            <person name="Lareau L.F."/>
            <person name="Lazarevic D."/>
            <person name="Lipovich L."/>
            <person name="Liu J."/>
            <person name="Liuni S."/>
            <person name="McWilliam S."/>
            <person name="Madan Babu M."/>
            <person name="Madera M."/>
            <person name="Marchionni L."/>
            <person name="Matsuda H."/>
            <person name="Matsuzawa S."/>
            <person name="Miki H."/>
            <person name="Mignone F."/>
            <person name="Miyake S."/>
            <person name="Morris K."/>
            <person name="Mottagui-Tabar S."/>
            <person name="Mulder N."/>
            <person name="Nakano N."/>
            <person name="Nakauchi H."/>
            <person name="Ng P."/>
            <person name="Nilsson R."/>
            <person name="Nishiguchi S."/>
            <person name="Nishikawa S."/>
            <person name="Nori F."/>
            <person name="Ohara O."/>
            <person name="Okazaki Y."/>
            <person name="Orlando V."/>
            <person name="Pang K.C."/>
            <person name="Pavan W.J."/>
            <person name="Pavesi G."/>
            <person name="Pesole G."/>
            <person name="Petrovsky N."/>
            <person name="Piazza S."/>
            <person name="Reed J."/>
            <person name="Reid J.F."/>
            <person name="Ring B.Z."/>
            <person name="Ringwald M."/>
            <person name="Rost B."/>
            <person name="Ruan Y."/>
            <person name="Salzberg S.L."/>
            <person name="Sandelin A."/>
            <person name="Schneider C."/>
            <person name="Schoenbach C."/>
            <person name="Sekiguchi K."/>
            <person name="Semple C.A."/>
            <person name="Seno S."/>
            <person name="Sessa L."/>
            <person name="Sheng Y."/>
            <person name="Shibata Y."/>
            <person name="Shimada H."/>
            <person name="Shimada K."/>
            <person name="Silva D."/>
            <person name="Sinclair B."/>
            <person name="Sperling S."/>
            <person name="Stupka E."/>
            <person name="Sugiura K."/>
            <person name="Sultana R."/>
            <person name="Takenaka Y."/>
            <person name="Taki K."/>
            <person name="Tammoja K."/>
            <person name="Tan S.L."/>
            <person name="Tang S."/>
            <person name="Taylor M.S."/>
            <person name="Tegner J."/>
            <person name="Teichmann S.A."/>
            <person name="Ueda H.R."/>
            <person name="van Nimwegen E."/>
            <person name="Verardo R."/>
            <person name="Wei C.L."/>
            <person name="Yagi K."/>
            <person name="Yamanishi H."/>
            <person name="Zabarovsky E."/>
            <person name="Zhu S."/>
            <person name="Zimmer A."/>
            <person name="Hide W."/>
            <person name="Bult C."/>
            <person name="Grimmond S.M."/>
            <person name="Teasdale R.D."/>
            <person name="Liu E.T."/>
            <person name="Brusic V."/>
            <person name="Quackenbush J."/>
            <person name="Wahlestedt C."/>
            <person name="Mattick J.S."/>
            <person name="Hume D.A."/>
            <person name="Kai C."/>
            <person name="Sasaki D."/>
            <person name="Tomaru Y."/>
            <person name="Fukuda S."/>
            <person name="Kanamori-Katayama M."/>
            <person name="Suzuki M."/>
            <person name="Aoki J."/>
            <person name="Arakawa T."/>
            <person name="Iida J."/>
            <person name="Imamura K."/>
            <person name="Itoh M."/>
            <person name="Kato T."/>
            <person name="Kawaji H."/>
            <person name="Kawagashira N."/>
            <person name="Kawashima T."/>
            <person name="Kojima M."/>
            <person name="Kondo S."/>
            <person name="Konno H."/>
            <person name="Nakano K."/>
            <person name="Ninomiya N."/>
            <person name="Nishio T."/>
            <person name="Okada M."/>
            <person name="Plessy C."/>
            <person name="Shibata K."/>
            <person name="Shiraki T."/>
            <person name="Suzuki S."/>
            <person name="Tagami M."/>
            <person name="Waki K."/>
            <person name="Watahiki A."/>
            <person name="Okamura-Oho Y."/>
            <person name="Suzuki H."/>
            <person name="Kawai J."/>
            <person name="Hayashizaki Y."/>
        </authorList>
    </citation>
    <scope>NUCLEOTIDE SEQUENCE [LARGE SCALE MRNA]</scope>
    <source>
        <strain>C57BL/6J</strain>
        <tissue>Head</tissue>
        <tissue>Thymus</tissue>
    </source>
</reference>
<reference key="4">
    <citation type="journal article" date="2009" name="PLoS Biol.">
        <title>Lineage-specific biology revealed by a finished genome assembly of the mouse.</title>
        <authorList>
            <person name="Church D.M."/>
            <person name="Goodstadt L."/>
            <person name="Hillier L.W."/>
            <person name="Zody M.C."/>
            <person name="Goldstein S."/>
            <person name="She X."/>
            <person name="Bult C.J."/>
            <person name="Agarwala R."/>
            <person name="Cherry J.L."/>
            <person name="DiCuccio M."/>
            <person name="Hlavina W."/>
            <person name="Kapustin Y."/>
            <person name="Meric P."/>
            <person name="Maglott D."/>
            <person name="Birtle Z."/>
            <person name="Marques A.C."/>
            <person name="Graves T."/>
            <person name="Zhou S."/>
            <person name="Teague B."/>
            <person name="Potamousis K."/>
            <person name="Churas C."/>
            <person name="Place M."/>
            <person name="Herschleb J."/>
            <person name="Runnheim R."/>
            <person name="Forrest D."/>
            <person name="Amos-Landgraf J."/>
            <person name="Schwartz D.C."/>
            <person name="Cheng Z."/>
            <person name="Lindblad-Toh K."/>
            <person name="Eichler E.E."/>
            <person name="Ponting C.P."/>
        </authorList>
    </citation>
    <scope>NUCLEOTIDE SEQUENCE [LARGE SCALE GENOMIC DNA]</scope>
    <source>
        <strain>C57BL/6J</strain>
    </source>
</reference>
<reference key="5">
    <citation type="journal article" date="2017" name="J. Immunol.">
        <title>SLC46 Family Transporters Facilitate Cytosolic Innate Immune Recognition of Monomeric Peptidoglycans.</title>
        <authorList>
            <person name="Paik D."/>
            <person name="Monahan A."/>
            <person name="Caffrey D.R."/>
            <person name="Elling R."/>
            <person name="Goldman W.E."/>
            <person name="Silverman N."/>
        </authorList>
    </citation>
    <scope>FUNCTION</scope>
    <scope>TRANSPORTER ACTIVITY</scope>
    <scope>SUBCELLULAR LOCATION</scope>
</reference>
<reference key="6">
    <citation type="journal article" date="2021" name="ACS Cent. Sci.">
        <title>Human SLC46A2 Is the Dominant cGAMP Importer in Extracellular cGAMP-Sensing Macrophages and Monocytes.</title>
        <authorList>
            <person name="Cordova A.F."/>
            <person name="Ritchie C."/>
            <person name="Boehnert V."/>
            <person name="Li L."/>
        </authorList>
    </citation>
    <scope>FUNCTION</scope>
    <scope>TRANSPORTER ACTIVITY</scope>
</reference>
<reference key="7">
    <citation type="journal article" date="2023" name="Immunity">
        <title>Methotrexate suppresses psoriatic skin inflammation by inhibiting muropeptide transporter SLC46A2 activity.</title>
        <authorList>
            <person name="Bharadwaj R."/>
            <person name="Lusi C.F."/>
            <person name="Mashayekh S."/>
            <person name="Nagar A."/>
            <person name="Subbarao M."/>
            <person name="Kane G.I."/>
            <person name="Wodzanowski K.A."/>
            <person name="Brown A.R."/>
            <person name="Okuda K."/>
            <person name="Monahan A."/>
            <person name="Paik D."/>
            <person name="Nandy A."/>
            <person name="Anonick M.V."/>
            <person name="Goldman W.E."/>
            <person name="Kanneganti T.D."/>
            <person name="Orzalli M.H."/>
            <person name="Grimes C.L."/>
            <person name="Atukorale P.U."/>
            <person name="Silverman N."/>
        </authorList>
    </citation>
    <scope>FUNCTION</scope>
    <scope>TRANSPORTER ACTIVITY</scope>
    <scope>ACTIVITY REGULATION</scope>
    <scope>TISSUE SPECIFICITY</scope>
    <scope>DISRUPTION PHENOTYPE</scope>
</reference>
<feature type="chain" id="PRO_0000065660" description="Solute carrier family 46 member 2">
    <location>
        <begin position="1"/>
        <end position="479"/>
    </location>
</feature>
<feature type="topological domain" description="Cytoplasmic" evidence="2">
    <location>
        <begin position="1"/>
        <end position="23"/>
    </location>
</feature>
<feature type="transmembrane region" description="Helical; Name=1" evidence="2">
    <location>
        <begin position="24"/>
        <end position="44"/>
    </location>
</feature>
<feature type="topological domain" description="Extracellular" evidence="2">
    <location>
        <begin position="45"/>
        <end position="80"/>
    </location>
</feature>
<feature type="transmembrane region" description="Helical; Name=2" evidence="2">
    <location>
        <begin position="81"/>
        <end position="101"/>
    </location>
</feature>
<feature type="topological domain" description="Cytoplasmic" evidence="2">
    <location>
        <begin position="102"/>
        <end position="110"/>
    </location>
</feature>
<feature type="transmembrane region" description="Helical; Name=3" evidence="2">
    <location>
        <begin position="111"/>
        <end position="131"/>
    </location>
</feature>
<feature type="topological domain" description="Extracellular" evidence="2">
    <location>
        <begin position="132"/>
        <end position="140"/>
    </location>
</feature>
<feature type="transmembrane region" description="Helical; Name=4" evidence="2">
    <location>
        <begin position="141"/>
        <end position="161"/>
    </location>
</feature>
<feature type="topological domain" description="Cytoplasmic" evidence="2">
    <location>
        <begin position="162"/>
        <end position="174"/>
    </location>
</feature>
<feature type="transmembrane region" description="Helical; Name=5" evidence="2">
    <location>
        <begin position="175"/>
        <end position="195"/>
    </location>
</feature>
<feature type="topological domain" description="Extracellular" evidence="2">
    <location>
        <begin position="196"/>
        <end position="207"/>
    </location>
</feature>
<feature type="transmembrane region" description="Helical; Name=6" evidence="2">
    <location>
        <begin position="208"/>
        <end position="228"/>
    </location>
</feature>
<feature type="topological domain" description="Cytoplasmic" evidence="2">
    <location>
        <begin position="229"/>
        <end position="281"/>
    </location>
</feature>
<feature type="transmembrane region" description="Helical; Name=7" evidence="2">
    <location>
        <begin position="282"/>
        <end position="302"/>
    </location>
</feature>
<feature type="topological domain" description="Extracellular" evidence="2">
    <location>
        <begin position="303"/>
        <end position="321"/>
    </location>
</feature>
<feature type="transmembrane region" description="Helical; Name=8" evidence="2">
    <location>
        <begin position="322"/>
        <end position="342"/>
    </location>
</feature>
<feature type="topological domain" description="Cytoplasmic" evidence="2">
    <location>
        <begin position="343"/>
        <end position="348"/>
    </location>
</feature>
<feature type="transmembrane region" description="Helical; Name=9" evidence="2">
    <location>
        <begin position="349"/>
        <end position="369"/>
    </location>
</feature>
<feature type="topological domain" description="Extracellular" evidence="2">
    <location>
        <begin position="370"/>
        <end position="371"/>
    </location>
</feature>
<feature type="transmembrane region" description="Helical; Name=10" evidence="2">
    <location>
        <begin position="372"/>
        <end position="392"/>
    </location>
</feature>
<feature type="topological domain" description="Cytoplasmic" evidence="2">
    <location>
        <begin position="393"/>
        <end position="407"/>
    </location>
</feature>
<feature type="transmembrane region" description="Helical; Name=11" evidence="2">
    <location>
        <begin position="408"/>
        <end position="428"/>
    </location>
</feature>
<feature type="topological domain" description="Extracellular" evidence="2">
    <location>
        <begin position="429"/>
        <end position="441"/>
    </location>
</feature>
<feature type="transmembrane region" description="Helical; Name=12" evidence="2">
    <location>
        <begin position="442"/>
        <end position="462"/>
    </location>
</feature>
<feature type="topological domain" description="Cytoplasmic" evidence="2">
    <location>
        <begin position="463"/>
        <end position="479"/>
    </location>
</feature>
<feature type="region of interest" description="Disordered" evidence="3">
    <location>
        <begin position="255"/>
        <end position="277"/>
    </location>
</feature>
<feature type="glycosylation site" description="N-linked (GlcNAc...) asparagine" evidence="2">
    <location>
        <position position="57"/>
    </location>
</feature>
<feature type="glycosylation site" description="N-linked (GlcNAc...) asparagine" evidence="2">
    <location>
        <position position="61"/>
    </location>
</feature>
<feature type="sequence conflict" description="In Ref. 3; BAB30710." evidence="11" ref="3">
    <original>S</original>
    <variation>T</variation>
    <location>
        <position position="94"/>
    </location>
</feature>
<feature type="sequence conflict" description="In Ref. 1; AAF73110 and 2; AAK28344." evidence="11" ref="1 2">
    <original>G</original>
    <variation>R</variation>
    <location>
        <position position="274"/>
    </location>
</feature>
<feature type="sequence conflict" description="In Ref. 3; BAC30504." evidence="11" ref="3">
    <original>V</original>
    <variation>I</variation>
    <location>
        <position position="465"/>
    </location>
</feature>
<protein>
    <recommendedName>
        <fullName>Solute carrier family 46 member 2</fullName>
    </recommendedName>
    <alternativeName>
        <fullName>Thymic stromal cotransporter homolog</fullName>
    </alternativeName>
</protein>
<accession>Q8CA03</accession>
<accession>A2ANT4</accession>
<accession>Q9D3J2</accession>
<accession>Q9JLQ3</accession>
<keyword id="KW-1003">Cell membrane</keyword>
<keyword id="KW-0967">Endosome</keyword>
<keyword id="KW-0325">Glycoprotein</keyword>
<keyword id="KW-0472">Membrane</keyword>
<keyword id="KW-1185">Reference proteome</keyword>
<keyword id="KW-0812">Transmembrane</keyword>
<keyword id="KW-1133">Transmembrane helix</keyword>
<keyword id="KW-0813">Transport</keyword>
<evidence type="ECO:0000250" key="1">
    <source>
        <dbReference type="UniProtKB" id="Q9BY10"/>
    </source>
</evidence>
<evidence type="ECO:0000255" key="2"/>
<evidence type="ECO:0000256" key="3">
    <source>
        <dbReference type="SAM" id="MobiDB-lite"/>
    </source>
</evidence>
<evidence type="ECO:0000269" key="4">
    <source>
    </source>
</evidence>
<evidence type="ECO:0000269" key="5">
    <source>
    </source>
</evidence>
<evidence type="ECO:0000269" key="6">
    <source>
    </source>
</evidence>
<evidence type="ECO:0000269" key="7">
    <source>
    </source>
</evidence>
<evidence type="ECO:0000269" key="8">
    <source>
    </source>
</evidence>
<evidence type="ECO:0000303" key="9">
    <source>
    </source>
</evidence>
<evidence type="ECO:0000303" key="10">
    <source>
    </source>
</evidence>
<evidence type="ECO:0000305" key="11"/>
<evidence type="ECO:0000305" key="12">
    <source>
    </source>
</evidence>
<evidence type="ECO:0000305" key="13">
    <source>
    </source>
</evidence>
<evidence type="ECO:0000305" key="14">
    <source>
    </source>
</evidence>
<sequence>MGPGGTCPWSSRLSGFRVRTWIEPVVASTQVAGSLYDAGLLLVVKESFKSEAGGSSNYSANQSLVEYQEDQQQKAISNFNIIYNLVLGLTPLLSAYGLGWLSDRYHRKISICTAMLGFLLSRIGLLLKVMLDWPVEVMYGAAALNGLCGSFSAYWSGVMALGSLGCSEGRRSVRLILIDLVLGLAGFSGSMASGHLFKQIVGHSAQGLLLTACSVGCAAFALFYSLFVLKVPESKPNKVHPTVDTVSGMMGTYRTLDPDQQDKQNVPRNPRTPGKGKSSQREVVALLFVGAIIYDLAAVGTVDVMALFVLKEPLHWNQVQLGYGMASGYIIFITSFLGVLVFSRCFRDTTMIIIGMLSFGSGALLLAFVKETYMFYIARAIMLFALIPITTIRSAMSKLIKDSSYGKIFVILQLCLTLTGVVTSTIYNKIYQLTLDKFIGTCFVLSSFLSFLAIVPIGVVAYKQVPRSQQGECAEKQRS</sequence>
<organism>
    <name type="scientific">Mus musculus</name>
    <name type="common">Mouse</name>
    <dbReference type="NCBI Taxonomy" id="10090"/>
    <lineage>
        <taxon>Eukaryota</taxon>
        <taxon>Metazoa</taxon>
        <taxon>Chordata</taxon>
        <taxon>Craniata</taxon>
        <taxon>Vertebrata</taxon>
        <taxon>Euteleostomi</taxon>
        <taxon>Mammalia</taxon>
        <taxon>Eutheria</taxon>
        <taxon>Euarchontoglires</taxon>
        <taxon>Glires</taxon>
        <taxon>Rodentia</taxon>
        <taxon>Myomorpha</taxon>
        <taxon>Muroidea</taxon>
        <taxon>Muridae</taxon>
        <taxon>Murinae</taxon>
        <taxon>Mus</taxon>
        <taxon>Mus</taxon>
    </lineage>
</organism>
<name>S46A2_MOUSE</name>
<gene>
    <name evidence="10" type="primary">Slc46a2</name>
    <name evidence="9" type="synonym">Tscot</name>
</gene>